<name>LEUD_ALCBS</name>
<dbReference type="EC" id="4.2.1.33" evidence="1"/>
<dbReference type="EMBL" id="AM286690">
    <property type="protein sequence ID" value="CAL16917.1"/>
    <property type="molecule type" value="Genomic_DNA"/>
</dbReference>
<dbReference type="RefSeq" id="WP_011588750.1">
    <property type="nucleotide sequence ID" value="NC_008260.1"/>
</dbReference>
<dbReference type="SMR" id="Q0VPI1"/>
<dbReference type="STRING" id="393595.ABO_1469"/>
<dbReference type="KEGG" id="abo:ABO_1469"/>
<dbReference type="eggNOG" id="COG0066">
    <property type="taxonomic scope" value="Bacteria"/>
</dbReference>
<dbReference type="HOGENOM" id="CLU_081378_0_3_6"/>
<dbReference type="OrthoDB" id="9777465at2"/>
<dbReference type="UniPathway" id="UPA00048">
    <property type="reaction ID" value="UER00071"/>
</dbReference>
<dbReference type="Proteomes" id="UP000008871">
    <property type="component" value="Chromosome"/>
</dbReference>
<dbReference type="GO" id="GO:0009316">
    <property type="term" value="C:3-isopropylmalate dehydratase complex"/>
    <property type="evidence" value="ECO:0007669"/>
    <property type="project" value="InterPro"/>
</dbReference>
<dbReference type="GO" id="GO:0003861">
    <property type="term" value="F:3-isopropylmalate dehydratase activity"/>
    <property type="evidence" value="ECO:0007669"/>
    <property type="project" value="UniProtKB-UniRule"/>
</dbReference>
<dbReference type="GO" id="GO:0009098">
    <property type="term" value="P:L-leucine biosynthetic process"/>
    <property type="evidence" value="ECO:0007669"/>
    <property type="project" value="UniProtKB-UniRule"/>
</dbReference>
<dbReference type="CDD" id="cd01577">
    <property type="entry name" value="IPMI_Swivel"/>
    <property type="match status" value="1"/>
</dbReference>
<dbReference type="FunFam" id="3.20.19.10:FF:000003">
    <property type="entry name" value="3-isopropylmalate dehydratase small subunit"/>
    <property type="match status" value="1"/>
</dbReference>
<dbReference type="Gene3D" id="3.20.19.10">
    <property type="entry name" value="Aconitase, domain 4"/>
    <property type="match status" value="1"/>
</dbReference>
<dbReference type="HAMAP" id="MF_01031">
    <property type="entry name" value="LeuD_type1"/>
    <property type="match status" value="1"/>
</dbReference>
<dbReference type="InterPro" id="IPR004431">
    <property type="entry name" value="3-IsopropMal_deHydase_ssu"/>
</dbReference>
<dbReference type="InterPro" id="IPR015928">
    <property type="entry name" value="Aconitase/3IPM_dehydase_swvl"/>
</dbReference>
<dbReference type="InterPro" id="IPR000573">
    <property type="entry name" value="AconitaseA/IPMdHydase_ssu_swvl"/>
</dbReference>
<dbReference type="InterPro" id="IPR033940">
    <property type="entry name" value="IPMI_Swivel"/>
</dbReference>
<dbReference type="InterPro" id="IPR050075">
    <property type="entry name" value="LeuD"/>
</dbReference>
<dbReference type="NCBIfam" id="TIGR00171">
    <property type="entry name" value="leuD"/>
    <property type="match status" value="1"/>
</dbReference>
<dbReference type="NCBIfam" id="NF002458">
    <property type="entry name" value="PRK01641.1"/>
    <property type="match status" value="1"/>
</dbReference>
<dbReference type="PANTHER" id="PTHR43345:SF5">
    <property type="entry name" value="3-ISOPROPYLMALATE DEHYDRATASE SMALL SUBUNIT"/>
    <property type="match status" value="1"/>
</dbReference>
<dbReference type="PANTHER" id="PTHR43345">
    <property type="entry name" value="3-ISOPROPYLMALATE DEHYDRATASE SMALL SUBUNIT 2-RELATED-RELATED"/>
    <property type="match status" value="1"/>
</dbReference>
<dbReference type="Pfam" id="PF00694">
    <property type="entry name" value="Aconitase_C"/>
    <property type="match status" value="1"/>
</dbReference>
<dbReference type="SUPFAM" id="SSF52016">
    <property type="entry name" value="LeuD/IlvD-like"/>
    <property type="match status" value="1"/>
</dbReference>
<keyword id="KW-0028">Amino-acid biosynthesis</keyword>
<keyword id="KW-0100">Branched-chain amino acid biosynthesis</keyword>
<keyword id="KW-0432">Leucine biosynthesis</keyword>
<keyword id="KW-0456">Lyase</keyword>
<keyword id="KW-1185">Reference proteome</keyword>
<gene>
    <name evidence="1" type="primary">leuD</name>
    <name type="ordered locus">ABO_1469</name>
</gene>
<reference key="1">
    <citation type="journal article" date="2006" name="Nat. Biotechnol.">
        <title>Genome sequence of the ubiquitous hydrocarbon-degrading marine bacterium Alcanivorax borkumensis.</title>
        <authorList>
            <person name="Schneiker S."/>
            <person name="Martins dos Santos V.A.P."/>
            <person name="Bartels D."/>
            <person name="Bekel T."/>
            <person name="Brecht M."/>
            <person name="Buhrmester J."/>
            <person name="Chernikova T.N."/>
            <person name="Denaro R."/>
            <person name="Ferrer M."/>
            <person name="Gertler C."/>
            <person name="Goesmann A."/>
            <person name="Golyshina O.V."/>
            <person name="Kaminski F."/>
            <person name="Khachane A.N."/>
            <person name="Lang S."/>
            <person name="Linke B."/>
            <person name="McHardy A.C."/>
            <person name="Meyer F."/>
            <person name="Nechitaylo T."/>
            <person name="Puehler A."/>
            <person name="Regenhardt D."/>
            <person name="Rupp O."/>
            <person name="Sabirova J.S."/>
            <person name="Selbitschka W."/>
            <person name="Yakimov M.M."/>
            <person name="Timmis K.N."/>
            <person name="Vorhoelter F.-J."/>
            <person name="Weidner S."/>
            <person name="Kaiser O."/>
            <person name="Golyshin P.N."/>
        </authorList>
    </citation>
    <scope>NUCLEOTIDE SEQUENCE [LARGE SCALE GENOMIC DNA]</scope>
    <source>
        <strain>ATCC 700651 / DSM 11573 / NCIMB 13689 / SK2</strain>
    </source>
</reference>
<protein>
    <recommendedName>
        <fullName evidence="1">3-isopropylmalate dehydratase small subunit</fullName>
        <ecNumber evidence="1">4.2.1.33</ecNumber>
    </recommendedName>
    <alternativeName>
        <fullName evidence="1">Alpha-IPM isomerase</fullName>
        <shortName evidence="1">IPMI</shortName>
    </alternativeName>
    <alternativeName>
        <fullName evidence="1">Isopropylmalate isomerase</fullName>
    </alternativeName>
</protein>
<comment type="function">
    <text evidence="1">Catalyzes the isomerization between 2-isopropylmalate and 3-isopropylmalate, via the formation of 2-isopropylmaleate.</text>
</comment>
<comment type="catalytic activity">
    <reaction evidence="1">
        <text>(2R,3S)-3-isopropylmalate = (2S)-2-isopropylmalate</text>
        <dbReference type="Rhea" id="RHEA:32287"/>
        <dbReference type="ChEBI" id="CHEBI:1178"/>
        <dbReference type="ChEBI" id="CHEBI:35121"/>
        <dbReference type="EC" id="4.2.1.33"/>
    </reaction>
</comment>
<comment type="pathway">
    <text evidence="1">Amino-acid biosynthesis; L-leucine biosynthesis; L-leucine from 3-methyl-2-oxobutanoate: step 2/4.</text>
</comment>
<comment type="subunit">
    <text evidence="1">Heterodimer of LeuC and LeuD.</text>
</comment>
<comment type="similarity">
    <text evidence="1">Belongs to the LeuD family. LeuD type 1 subfamily.</text>
</comment>
<sequence>MEKFVRHDGLVAPLDRANVDTDQIIPKQFLKSIKRTGFGPNLFDEWRYLDEGFPGQDNAARLVNNDFVLNQPDYQGASILLTRRNFGCGSSREHAPWALMDFGFKAIIAPSFADIFYNNCFKNGLLPIVLSEDNVEALFQVVSSKGGYRITIDLEGQQVIPESGEPLPFEIDEFRKHCLLNGLDEIGLTLNEADAIRAYERSRIEREPWVFADH</sequence>
<feature type="chain" id="PRO_1000063726" description="3-isopropylmalate dehydratase small subunit">
    <location>
        <begin position="1"/>
        <end position="214"/>
    </location>
</feature>
<organism>
    <name type="scientific">Alcanivorax borkumensis (strain ATCC 700651 / DSM 11573 / NCIMB 13689 / SK2)</name>
    <dbReference type="NCBI Taxonomy" id="393595"/>
    <lineage>
        <taxon>Bacteria</taxon>
        <taxon>Pseudomonadati</taxon>
        <taxon>Pseudomonadota</taxon>
        <taxon>Gammaproteobacteria</taxon>
        <taxon>Oceanospirillales</taxon>
        <taxon>Alcanivoracaceae</taxon>
        <taxon>Alcanivorax</taxon>
    </lineage>
</organism>
<accession>Q0VPI1</accession>
<evidence type="ECO:0000255" key="1">
    <source>
        <dbReference type="HAMAP-Rule" id="MF_01031"/>
    </source>
</evidence>
<proteinExistence type="inferred from homology"/>